<evidence type="ECO:0000255" key="1">
    <source>
        <dbReference type="HAMAP-Rule" id="MF_00339"/>
    </source>
</evidence>
<reference key="1">
    <citation type="journal article" date="2003" name="Proc. Natl. Acad. Sci. U.S.A.">
        <title>Complete genome sequence and analysis of Wolinella succinogenes.</title>
        <authorList>
            <person name="Baar C."/>
            <person name="Eppinger M."/>
            <person name="Raddatz G."/>
            <person name="Simon J."/>
            <person name="Lanz C."/>
            <person name="Klimmek O."/>
            <person name="Nandakumar R."/>
            <person name="Gross R."/>
            <person name="Rosinus A."/>
            <person name="Keller H."/>
            <person name="Jagtap P."/>
            <person name="Linke B."/>
            <person name="Meyer F."/>
            <person name="Lederer H."/>
            <person name="Schuster S.C."/>
        </authorList>
    </citation>
    <scope>NUCLEOTIDE SEQUENCE [LARGE SCALE GENOMIC DNA]</scope>
    <source>
        <strain>ATCC 29543 / DSM 1740 / CCUG 13145 / JCM 31913 / LMG 7466 / NCTC 11488 / FDC 602W</strain>
    </source>
</reference>
<dbReference type="EC" id="2.7.1.11" evidence="1"/>
<dbReference type="EMBL" id="BX571659">
    <property type="protein sequence ID" value="CAE10129.1"/>
    <property type="molecule type" value="Genomic_DNA"/>
</dbReference>
<dbReference type="RefSeq" id="WP_011138922.1">
    <property type="nucleotide sequence ID" value="NC_005090.1"/>
</dbReference>
<dbReference type="SMR" id="Q7M9C2"/>
<dbReference type="STRING" id="273121.WS1028"/>
<dbReference type="KEGG" id="wsu:WS1028"/>
<dbReference type="eggNOG" id="COG0205">
    <property type="taxonomic scope" value="Bacteria"/>
</dbReference>
<dbReference type="HOGENOM" id="CLU_020655_0_1_7"/>
<dbReference type="UniPathway" id="UPA00109">
    <property type="reaction ID" value="UER00182"/>
</dbReference>
<dbReference type="Proteomes" id="UP000000422">
    <property type="component" value="Chromosome"/>
</dbReference>
<dbReference type="GO" id="GO:0005945">
    <property type="term" value="C:6-phosphofructokinase complex"/>
    <property type="evidence" value="ECO:0007669"/>
    <property type="project" value="TreeGrafter"/>
</dbReference>
<dbReference type="GO" id="GO:0003872">
    <property type="term" value="F:6-phosphofructokinase activity"/>
    <property type="evidence" value="ECO:0007669"/>
    <property type="project" value="UniProtKB-UniRule"/>
</dbReference>
<dbReference type="GO" id="GO:0016208">
    <property type="term" value="F:AMP binding"/>
    <property type="evidence" value="ECO:0007669"/>
    <property type="project" value="TreeGrafter"/>
</dbReference>
<dbReference type="GO" id="GO:0005524">
    <property type="term" value="F:ATP binding"/>
    <property type="evidence" value="ECO:0007669"/>
    <property type="project" value="UniProtKB-KW"/>
</dbReference>
<dbReference type="GO" id="GO:0070095">
    <property type="term" value="F:fructose-6-phosphate binding"/>
    <property type="evidence" value="ECO:0007669"/>
    <property type="project" value="TreeGrafter"/>
</dbReference>
<dbReference type="GO" id="GO:0042802">
    <property type="term" value="F:identical protein binding"/>
    <property type="evidence" value="ECO:0007669"/>
    <property type="project" value="TreeGrafter"/>
</dbReference>
<dbReference type="GO" id="GO:0046872">
    <property type="term" value="F:metal ion binding"/>
    <property type="evidence" value="ECO:0007669"/>
    <property type="project" value="UniProtKB-KW"/>
</dbReference>
<dbReference type="GO" id="GO:0048029">
    <property type="term" value="F:monosaccharide binding"/>
    <property type="evidence" value="ECO:0007669"/>
    <property type="project" value="TreeGrafter"/>
</dbReference>
<dbReference type="GO" id="GO:0061621">
    <property type="term" value="P:canonical glycolysis"/>
    <property type="evidence" value="ECO:0007669"/>
    <property type="project" value="TreeGrafter"/>
</dbReference>
<dbReference type="GO" id="GO:0030388">
    <property type="term" value="P:fructose 1,6-bisphosphate metabolic process"/>
    <property type="evidence" value="ECO:0007669"/>
    <property type="project" value="TreeGrafter"/>
</dbReference>
<dbReference type="GO" id="GO:0006002">
    <property type="term" value="P:fructose 6-phosphate metabolic process"/>
    <property type="evidence" value="ECO:0007669"/>
    <property type="project" value="InterPro"/>
</dbReference>
<dbReference type="FunFam" id="3.40.50.460:FF:000002">
    <property type="entry name" value="ATP-dependent 6-phosphofructokinase"/>
    <property type="match status" value="1"/>
</dbReference>
<dbReference type="Gene3D" id="3.40.50.450">
    <property type="match status" value="1"/>
</dbReference>
<dbReference type="Gene3D" id="3.40.50.460">
    <property type="entry name" value="Phosphofructokinase domain"/>
    <property type="match status" value="1"/>
</dbReference>
<dbReference type="HAMAP" id="MF_00339">
    <property type="entry name" value="Phosphofructokinase_I_B1"/>
    <property type="match status" value="1"/>
</dbReference>
<dbReference type="InterPro" id="IPR022953">
    <property type="entry name" value="ATP_PFK"/>
</dbReference>
<dbReference type="InterPro" id="IPR012003">
    <property type="entry name" value="ATP_PFK_prok-type"/>
</dbReference>
<dbReference type="InterPro" id="IPR012828">
    <property type="entry name" value="PFKA_ATP_prok"/>
</dbReference>
<dbReference type="InterPro" id="IPR015912">
    <property type="entry name" value="Phosphofructokinase_CS"/>
</dbReference>
<dbReference type="InterPro" id="IPR000023">
    <property type="entry name" value="Phosphofructokinase_dom"/>
</dbReference>
<dbReference type="InterPro" id="IPR035966">
    <property type="entry name" value="PKF_sf"/>
</dbReference>
<dbReference type="NCBIfam" id="NF002872">
    <property type="entry name" value="PRK03202.1"/>
    <property type="match status" value="1"/>
</dbReference>
<dbReference type="PANTHER" id="PTHR13697:SF4">
    <property type="entry name" value="ATP-DEPENDENT 6-PHOSPHOFRUCTOKINASE"/>
    <property type="match status" value="1"/>
</dbReference>
<dbReference type="PANTHER" id="PTHR13697">
    <property type="entry name" value="PHOSPHOFRUCTOKINASE"/>
    <property type="match status" value="1"/>
</dbReference>
<dbReference type="Pfam" id="PF00365">
    <property type="entry name" value="PFK"/>
    <property type="match status" value="1"/>
</dbReference>
<dbReference type="PIRSF" id="PIRSF000532">
    <property type="entry name" value="ATP_PFK_prok"/>
    <property type="match status" value="1"/>
</dbReference>
<dbReference type="PRINTS" id="PR00476">
    <property type="entry name" value="PHFRCTKINASE"/>
</dbReference>
<dbReference type="SUPFAM" id="SSF53784">
    <property type="entry name" value="Phosphofructokinase"/>
    <property type="match status" value="1"/>
</dbReference>
<dbReference type="PROSITE" id="PS00433">
    <property type="entry name" value="PHOSPHOFRUCTOKINASE"/>
    <property type="match status" value="1"/>
</dbReference>
<proteinExistence type="inferred from homology"/>
<name>PFKA_WOLSU</name>
<feature type="chain" id="PRO_1000059809" description="ATP-dependent 6-phosphofructokinase">
    <location>
        <begin position="1"/>
        <end position="319"/>
    </location>
</feature>
<feature type="active site" description="Proton acceptor" evidence="1">
    <location>
        <position position="127"/>
    </location>
</feature>
<feature type="binding site" evidence="1">
    <location>
        <position position="10"/>
    </location>
    <ligand>
        <name>ATP</name>
        <dbReference type="ChEBI" id="CHEBI:30616"/>
    </ligand>
</feature>
<feature type="binding site" evidence="1">
    <location>
        <begin position="71"/>
        <end position="72"/>
    </location>
    <ligand>
        <name>ATP</name>
        <dbReference type="ChEBI" id="CHEBI:30616"/>
    </ligand>
</feature>
<feature type="binding site" evidence="1">
    <location>
        <begin position="101"/>
        <end position="104"/>
    </location>
    <ligand>
        <name>ATP</name>
        <dbReference type="ChEBI" id="CHEBI:30616"/>
    </ligand>
</feature>
<feature type="binding site" evidence="1">
    <location>
        <position position="102"/>
    </location>
    <ligand>
        <name>Mg(2+)</name>
        <dbReference type="ChEBI" id="CHEBI:18420"/>
        <note>catalytic</note>
    </ligand>
</feature>
<feature type="binding site" description="in other chain" evidence="1">
    <location>
        <begin position="125"/>
        <end position="127"/>
    </location>
    <ligand>
        <name>substrate</name>
        <note>ligand shared between dimeric partners</note>
    </ligand>
</feature>
<feature type="binding site" evidence="1">
    <location>
        <position position="154"/>
    </location>
    <ligand>
        <name>ADP</name>
        <dbReference type="ChEBI" id="CHEBI:456216"/>
        <note>allosteric activator</note>
    </ligand>
</feature>
<feature type="binding site" evidence="1">
    <location>
        <position position="162"/>
    </location>
    <ligand>
        <name>substrate</name>
        <note>ligand shared between dimeric partners</note>
    </ligand>
</feature>
<feature type="binding site" description="in other chain" evidence="1">
    <location>
        <begin position="169"/>
        <end position="171"/>
    </location>
    <ligand>
        <name>substrate</name>
        <note>ligand shared between dimeric partners</note>
    </ligand>
</feature>
<feature type="binding site" evidence="1">
    <location>
        <begin position="185"/>
        <end position="187"/>
    </location>
    <ligand>
        <name>ADP</name>
        <dbReference type="ChEBI" id="CHEBI:456216"/>
        <note>allosteric activator</note>
    </ligand>
</feature>
<feature type="binding site" description="in other chain" evidence="1">
    <location>
        <position position="223"/>
    </location>
    <ligand>
        <name>substrate</name>
        <note>ligand shared between dimeric partners</note>
    </ligand>
</feature>
<feature type="binding site" evidence="1">
    <location>
        <position position="244"/>
    </location>
    <ligand>
        <name>substrate</name>
        <note>ligand shared between dimeric partners</note>
    </ligand>
</feature>
<feature type="binding site" description="in other chain" evidence="1">
    <location>
        <begin position="250"/>
        <end position="253"/>
    </location>
    <ligand>
        <name>substrate</name>
        <note>ligand shared between dimeric partners</note>
    </ligand>
</feature>
<protein>
    <recommendedName>
        <fullName evidence="1">ATP-dependent 6-phosphofructokinase</fullName>
        <shortName evidence="1">ATP-PFK</shortName>
        <shortName evidence="1">Phosphofructokinase</shortName>
        <ecNumber evidence="1">2.7.1.11</ecNumber>
    </recommendedName>
    <alternativeName>
        <fullName evidence="1">Phosphohexokinase</fullName>
    </alternativeName>
</protein>
<keyword id="KW-0021">Allosteric enzyme</keyword>
<keyword id="KW-0067">ATP-binding</keyword>
<keyword id="KW-0963">Cytoplasm</keyword>
<keyword id="KW-0324">Glycolysis</keyword>
<keyword id="KW-0418">Kinase</keyword>
<keyword id="KW-0460">Magnesium</keyword>
<keyword id="KW-0479">Metal-binding</keyword>
<keyword id="KW-0547">Nucleotide-binding</keyword>
<keyword id="KW-1185">Reference proteome</keyword>
<keyword id="KW-0808">Transferase</keyword>
<sequence length="319" mass="34685">MRIGLVCSGGDCAGMNPATKKFVEYSLELGYEPYFIREGLEGLIEGKIEPATLKEVSGILHKGGTILQSSRSKRFFDPAFRLQAYQNLQRHSIEALVTLGGDGSFRAMEVLAKEHSLLYAGIPATIDNDIRASDYALGVDSALNVILESTDRLRDTAESFRRAFVVEVMGRDCGYLALASAIACGAEVCIIPEMGYSLQSLGARLKEELGTGKRRYVLAIVSEGAKASSEVVSWLKEEVGIETRITILGHVQRGGSPSVYDRLMGFRFMQKALDSLSLGKSGVVVLREGRVEFLSSQEASSAPASLPLDMVRLASRLMF</sequence>
<accession>Q7M9C2</accession>
<gene>
    <name evidence="1" type="primary">pfkA</name>
    <name type="ordered locus">WS1028</name>
</gene>
<organism>
    <name type="scientific">Wolinella succinogenes (strain ATCC 29543 / DSM 1740 / CCUG 13145 / JCM 31913 / LMG 7466 / NCTC 11488 / FDC 602W)</name>
    <name type="common">Vibrio succinogenes</name>
    <dbReference type="NCBI Taxonomy" id="273121"/>
    <lineage>
        <taxon>Bacteria</taxon>
        <taxon>Pseudomonadati</taxon>
        <taxon>Campylobacterota</taxon>
        <taxon>Epsilonproteobacteria</taxon>
        <taxon>Campylobacterales</taxon>
        <taxon>Helicobacteraceae</taxon>
        <taxon>Wolinella</taxon>
    </lineage>
</organism>
<comment type="function">
    <text evidence="1">Catalyzes the phosphorylation of D-fructose 6-phosphate to fructose 1,6-bisphosphate by ATP, the first committing step of glycolysis.</text>
</comment>
<comment type="catalytic activity">
    <reaction evidence="1">
        <text>beta-D-fructose 6-phosphate + ATP = beta-D-fructose 1,6-bisphosphate + ADP + H(+)</text>
        <dbReference type="Rhea" id="RHEA:16109"/>
        <dbReference type="ChEBI" id="CHEBI:15378"/>
        <dbReference type="ChEBI" id="CHEBI:30616"/>
        <dbReference type="ChEBI" id="CHEBI:32966"/>
        <dbReference type="ChEBI" id="CHEBI:57634"/>
        <dbReference type="ChEBI" id="CHEBI:456216"/>
        <dbReference type="EC" id="2.7.1.11"/>
    </reaction>
</comment>
<comment type="cofactor">
    <cofactor evidence="1">
        <name>Mg(2+)</name>
        <dbReference type="ChEBI" id="CHEBI:18420"/>
    </cofactor>
</comment>
<comment type="activity regulation">
    <text evidence="1">Allosterically activated by ADP and other diphosphonucleosides, and allosterically inhibited by phosphoenolpyruvate.</text>
</comment>
<comment type="pathway">
    <text evidence="1">Carbohydrate degradation; glycolysis; D-glyceraldehyde 3-phosphate and glycerone phosphate from D-glucose: step 3/4.</text>
</comment>
<comment type="subunit">
    <text evidence="1">Homotetramer.</text>
</comment>
<comment type="subcellular location">
    <subcellularLocation>
        <location evidence="1">Cytoplasm</location>
    </subcellularLocation>
</comment>
<comment type="similarity">
    <text evidence="1">Belongs to the phosphofructokinase type A (PFKA) family. ATP-dependent PFK group I subfamily. Prokaryotic clade 'B1' sub-subfamily.</text>
</comment>